<protein>
    <recommendedName>
        <fullName>Protein phosphatase 1 regulatory subunit 12C</fullName>
    </recommendedName>
    <alternativeName>
        <fullName>Protein phosphatase 1 myosin-binding subunit of 85 kDa</fullName>
        <shortName>Protein phosphatase 1 myosin-binding subunit p85</shortName>
    </alternativeName>
</protein>
<gene>
    <name evidence="19" type="primary">PPP1R12C</name>
    <name type="synonym">LENG3</name>
    <name evidence="9" type="synonym">MBS85</name>
</gene>
<reference evidence="13 14" key="1">
    <citation type="journal article" date="2001" name="J. Biol. Chem.">
        <title>Phosphorylation of a novel myosin binding subunit of protein phosphatase 1 reveals a conserved mechanism in the regulation of actin cytoskeleton.</title>
        <authorList>
            <person name="Tan I."/>
            <person name="Ng C.H."/>
            <person name="Lim L."/>
            <person name="Leung T."/>
        </authorList>
    </citation>
    <scope>NUCLEOTIDE SEQUENCE [MRNA] (ISOFORM 1)</scope>
    <scope>FUNCTION</scope>
    <scope>INTERACTION WITH PPP1CB</scope>
    <scope>SUBCELLULAR LOCATION</scope>
    <scope>TISSUE SPECIFICITY</scope>
    <scope>PHOSPHORYLATION AT THR-560</scope>
</reference>
<reference evidence="13 16" key="2">
    <citation type="journal article" date="2004" name="Nat. Genet.">
        <title>Complete sequencing and characterization of 21,243 full-length human cDNAs.</title>
        <authorList>
            <person name="Ota T."/>
            <person name="Suzuki Y."/>
            <person name="Nishikawa T."/>
            <person name="Otsuki T."/>
            <person name="Sugiyama T."/>
            <person name="Irie R."/>
            <person name="Wakamatsu A."/>
            <person name="Hayashi K."/>
            <person name="Sato H."/>
            <person name="Nagai K."/>
            <person name="Kimura K."/>
            <person name="Makita H."/>
            <person name="Sekine M."/>
            <person name="Obayashi M."/>
            <person name="Nishi T."/>
            <person name="Shibahara T."/>
            <person name="Tanaka T."/>
            <person name="Ishii S."/>
            <person name="Yamamoto J."/>
            <person name="Saito K."/>
            <person name="Kawai Y."/>
            <person name="Isono Y."/>
            <person name="Nakamura Y."/>
            <person name="Nagahari K."/>
            <person name="Murakami K."/>
            <person name="Yasuda T."/>
            <person name="Iwayanagi T."/>
            <person name="Wagatsuma M."/>
            <person name="Shiratori A."/>
            <person name="Sudo H."/>
            <person name="Hosoiri T."/>
            <person name="Kaku Y."/>
            <person name="Kodaira H."/>
            <person name="Kondo H."/>
            <person name="Sugawara M."/>
            <person name="Takahashi M."/>
            <person name="Kanda K."/>
            <person name="Yokoi T."/>
            <person name="Furuya T."/>
            <person name="Kikkawa E."/>
            <person name="Omura Y."/>
            <person name="Abe K."/>
            <person name="Kamihara K."/>
            <person name="Katsuta N."/>
            <person name="Sato K."/>
            <person name="Tanikawa M."/>
            <person name="Yamazaki M."/>
            <person name="Ninomiya K."/>
            <person name="Ishibashi T."/>
            <person name="Yamashita H."/>
            <person name="Murakawa K."/>
            <person name="Fujimori K."/>
            <person name="Tanai H."/>
            <person name="Kimata M."/>
            <person name="Watanabe M."/>
            <person name="Hiraoka S."/>
            <person name="Chiba Y."/>
            <person name="Ishida S."/>
            <person name="Ono Y."/>
            <person name="Takiguchi S."/>
            <person name="Watanabe S."/>
            <person name="Yosida M."/>
            <person name="Hotuta T."/>
            <person name="Kusano J."/>
            <person name="Kanehori K."/>
            <person name="Takahashi-Fujii A."/>
            <person name="Hara H."/>
            <person name="Tanase T.-O."/>
            <person name="Nomura Y."/>
            <person name="Togiya S."/>
            <person name="Komai F."/>
            <person name="Hara R."/>
            <person name="Takeuchi K."/>
            <person name="Arita M."/>
            <person name="Imose N."/>
            <person name="Musashino K."/>
            <person name="Yuuki H."/>
            <person name="Oshima A."/>
            <person name="Sasaki N."/>
            <person name="Aotsuka S."/>
            <person name="Yoshikawa Y."/>
            <person name="Matsunawa H."/>
            <person name="Ichihara T."/>
            <person name="Shiohata N."/>
            <person name="Sano S."/>
            <person name="Moriya S."/>
            <person name="Momiyama H."/>
            <person name="Satoh N."/>
            <person name="Takami S."/>
            <person name="Terashima Y."/>
            <person name="Suzuki O."/>
            <person name="Nakagawa S."/>
            <person name="Senoh A."/>
            <person name="Mizoguchi H."/>
            <person name="Goto Y."/>
            <person name="Shimizu F."/>
            <person name="Wakebe H."/>
            <person name="Hishigaki H."/>
            <person name="Watanabe T."/>
            <person name="Sugiyama A."/>
            <person name="Takemoto M."/>
            <person name="Kawakami B."/>
            <person name="Yamazaki M."/>
            <person name="Watanabe K."/>
            <person name="Kumagai A."/>
            <person name="Itakura S."/>
            <person name="Fukuzumi Y."/>
            <person name="Fujimori Y."/>
            <person name="Komiyama M."/>
            <person name="Tashiro H."/>
            <person name="Tanigami A."/>
            <person name="Fujiwara T."/>
            <person name="Ono T."/>
            <person name="Yamada K."/>
            <person name="Fujii Y."/>
            <person name="Ozaki K."/>
            <person name="Hirao M."/>
            <person name="Ohmori Y."/>
            <person name="Kawabata A."/>
            <person name="Hikiji T."/>
            <person name="Kobatake N."/>
            <person name="Inagaki H."/>
            <person name="Ikema Y."/>
            <person name="Okamoto S."/>
            <person name="Okitani R."/>
            <person name="Kawakami T."/>
            <person name="Noguchi S."/>
            <person name="Itoh T."/>
            <person name="Shigeta K."/>
            <person name="Senba T."/>
            <person name="Matsumura K."/>
            <person name="Nakajima Y."/>
            <person name="Mizuno T."/>
            <person name="Morinaga M."/>
            <person name="Sasaki M."/>
            <person name="Togashi T."/>
            <person name="Oyama M."/>
            <person name="Hata H."/>
            <person name="Watanabe M."/>
            <person name="Komatsu T."/>
            <person name="Mizushima-Sugano J."/>
            <person name="Satoh T."/>
            <person name="Shirai Y."/>
            <person name="Takahashi Y."/>
            <person name="Nakagawa K."/>
            <person name="Okumura K."/>
            <person name="Nagase T."/>
            <person name="Nomura N."/>
            <person name="Kikuchi H."/>
            <person name="Masuho Y."/>
            <person name="Yamashita R."/>
            <person name="Nakai K."/>
            <person name="Yada T."/>
            <person name="Nakamura Y."/>
            <person name="Ohara O."/>
            <person name="Isogai T."/>
            <person name="Sugano S."/>
        </authorList>
    </citation>
    <scope>NUCLEOTIDE SEQUENCE [LARGE SCALE MRNA] (ISOFORM 5)</scope>
    <scope>NUCLEOTIDE SEQUENCE [LARGE SCALE MRNA] OF 103-782 (ISOFORM 3)</scope>
    <scope>NUCLEOTIDE SEQUENCE [LARGE SCALE MRNA] OF 487-782 (ISOFORM 2)</scope>
    <source>
        <tissue>Brain</tissue>
        <tissue evidence="16">Kidney epithelium</tissue>
        <tissue evidence="17">Pericardium</tissue>
    </source>
</reference>
<reference evidence="13 18" key="3">
    <citation type="submission" date="2005-03" db="EMBL/GenBank/DDBJ databases">
        <authorList>
            <person name="Totoki Y."/>
            <person name="Toyoda A."/>
            <person name="Takeda T."/>
            <person name="Sakaki Y."/>
            <person name="Tanaka A."/>
            <person name="Yokoyama S."/>
            <person name="Ohara O."/>
            <person name="Nagase T."/>
            <person name="Kikuno R.F."/>
        </authorList>
    </citation>
    <scope>NUCLEOTIDE SEQUENCE [LARGE SCALE MRNA] OF 45-782 (ISOFORM 3)</scope>
    <source>
        <tissue evidence="18">Brain</tissue>
    </source>
</reference>
<reference key="4">
    <citation type="journal article" date="2004" name="Nature">
        <title>The DNA sequence and biology of human chromosome 19.</title>
        <authorList>
            <person name="Grimwood J."/>
            <person name="Gordon L.A."/>
            <person name="Olsen A.S."/>
            <person name="Terry A."/>
            <person name="Schmutz J."/>
            <person name="Lamerdin J.E."/>
            <person name="Hellsten U."/>
            <person name="Goodstein D."/>
            <person name="Couronne O."/>
            <person name="Tran-Gyamfi M."/>
            <person name="Aerts A."/>
            <person name="Altherr M."/>
            <person name="Ashworth L."/>
            <person name="Bajorek E."/>
            <person name="Black S."/>
            <person name="Branscomb E."/>
            <person name="Caenepeel S."/>
            <person name="Carrano A.V."/>
            <person name="Caoile C."/>
            <person name="Chan Y.M."/>
            <person name="Christensen M."/>
            <person name="Cleland C.A."/>
            <person name="Copeland A."/>
            <person name="Dalin E."/>
            <person name="Dehal P."/>
            <person name="Denys M."/>
            <person name="Detter J.C."/>
            <person name="Escobar J."/>
            <person name="Flowers D."/>
            <person name="Fotopulos D."/>
            <person name="Garcia C."/>
            <person name="Georgescu A.M."/>
            <person name="Glavina T."/>
            <person name="Gomez M."/>
            <person name="Gonzales E."/>
            <person name="Groza M."/>
            <person name="Hammon N."/>
            <person name="Hawkins T."/>
            <person name="Haydu L."/>
            <person name="Ho I."/>
            <person name="Huang W."/>
            <person name="Israni S."/>
            <person name="Jett J."/>
            <person name="Kadner K."/>
            <person name="Kimball H."/>
            <person name="Kobayashi A."/>
            <person name="Larionov V."/>
            <person name="Leem S.-H."/>
            <person name="Lopez F."/>
            <person name="Lou Y."/>
            <person name="Lowry S."/>
            <person name="Malfatti S."/>
            <person name="Martinez D."/>
            <person name="McCready P.M."/>
            <person name="Medina C."/>
            <person name="Morgan J."/>
            <person name="Nelson K."/>
            <person name="Nolan M."/>
            <person name="Ovcharenko I."/>
            <person name="Pitluck S."/>
            <person name="Pollard M."/>
            <person name="Popkie A.P."/>
            <person name="Predki P."/>
            <person name="Quan G."/>
            <person name="Ramirez L."/>
            <person name="Rash S."/>
            <person name="Retterer J."/>
            <person name="Rodriguez A."/>
            <person name="Rogers S."/>
            <person name="Salamov A."/>
            <person name="Salazar A."/>
            <person name="She X."/>
            <person name="Smith D."/>
            <person name="Slezak T."/>
            <person name="Solovyev V."/>
            <person name="Thayer N."/>
            <person name="Tice H."/>
            <person name="Tsai M."/>
            <person name="Ustaszewska A."/>
            <person name="Vo N."/>
            <person name="Wagner M."/>
            <person name="Wheeler J."/>
            <person name="Wu K."/>
            <person name="Xie G."/>
            <person name="Yang J."/>
            <person name="Dubchak I."/>
            <person name="Furey T.S."/>
            <person name="DeJong P."/>
            <person name="Dickson M."/>
            <person name="Gordon D."/>
            <person name="Eichler E.E."/>
            <person name="Pennacchio L.A."/>
            <person name="Richardson P."/>
            <person name="Stubbs L."/>
            <person name="Rokhsar D.S."/>
            <person name="Myers R.M."/>
            <person name="Rubin E.M."/>
            <person name="Lucas S.M."/>
        </authorList>
    </citation>
    <scope>NUCLEOTIDE SEQUENCE [LARGE SCALE GENOMIC DNA]</scope>
</reference>
<reference key="5">
    <citation type="journal article" date="2000" name="Immunogenetics">
        <title>Extensive gene duplications and a large inversion characterize the human leukocyte receptor cluster.</title>
        <authorList>
            <person name="Wende H."/>
            <person name="Volz A."/>
            <person name="Ziegler A."/>
        </authorList>
    </citation>
    <scope>NUCLEOTIDE SEQUENCE [MRNA] OF 107-191 (ISOFORM 1)</scope>
    <source>
        <tissue>Thymus</tissue>
    </source>
</reference>
<reference key="6">
    <citation type="journal article" date="2001" name="Immunogenetics">
        <authorList>
            <person name="Wende H."/>
            <person name="Volz A."/>
            <person name="Ziegler A."/>
        </authorList>
    </citation>
    <scope>ERRATUM OF PUBMED:10941842</scope>
</reference>
<reference key="7">
    <citation type="journal article" date="2007" name="BMC Genomics">
        <title>The full-ORF clone resource of the German cDNA consortium.</title>
        <authorList>
            <person name="Bechtel S."/>
            <person name="Rosenfelder H."/>
            <person name="Duda A."/>
            <person name="Schmidt C.P."/>
            <person name="Ernst U."/>
            <person name="Wellenreuther R."/>
            <person name="Mehrle A."/>
            <person name="Schuster C."/>
            <person name="Bahr A."/>
            <person name="Bloecker H."/>
            <person name="Heubner D."/>
            <person name="Hoerlein A."/>
            <person name="Michel G."/>
            <person name="Wedler H."/>
            <person name="Koehrer K."/>
            <person name="Ottenwaelder B."/>
            <person name="Poustka A."/>
            <person name="Wiemann S."/>
            <person name="Schupp I."/>
        </authorList>
    </citation>
    <scope>NUCLEOTIDE SEQUENCE [LARGE SCALE MRNA] OF 304-782 (ISOFORM 1)</scope>
    <source>
        <tissue>Testis</tissue>
    </source>
</reference>
<reference key="8">
    <citation type="journal article" date="2004" name="Genome Res.">
        <title>The status, quality, and expansion of the NIH full-length cDNA project: the Mammalian Gene Collection (MGC).</title>
        <authorList>
            <consortium name="The MGC Project Team"/>
        </authorList>
    </citation>
    <scope>NUCLEOTIDE SEQUENCE [LARGE SCALE MRNA] OF 420-782 (ISOFORM 4)</scope>
    <source>
        <tissue evidence="15">Endometrial adenocarcinoma</tissue>
    </source>
</reference>
<reference key="9">
    <citation type="journal article" date="2003" name="J. Biol. Chem.">
        <title>PDZ domain-mediated interaction of interleukin-16 precursor proteins with myosin phosphatase targeting subunits.</title>
        <authorList>
            <person name="Bannert N."/>
            <person name="Vollhardt K."/>
            <person name="Asomuddinov B."/>
            <person name="Haag M."/>
            <person name="Koenig H."/>
            <person name="Norley S."/>
            <person name="Kurth R."/>
        </authorList>
    </citation>
    <scope>INTERACTION WITH IL16</scope>
    <scope>SUBCELLULAR LOCATION</scope>
</reference>
<reference key="10">
    <citation type="journal article" date="2007" name="Science">
        <title>ATM and ATR substrate analysis reveals extensive protein networks responsive to DNA damage.</title>
        <authorList>
            <person name="Matsuoka S."/>
            <person name="Ballif B.A."/>
            <person name="Smogorzewska A."/>
            <person name="McDonald E.R. III"/>
            <person name="Hurov K.E."/>
            <person name="Luo J."/>
            <person name="Bakalarski C.E."/>
            <person name="Zhao Z."/>
            <person name="Solimini N."/>
            <person name="Lerenthal Y."/>
            <person name="Shiloh Y."/>
            <person name="Gygi S.P."/>
            <person name="Elledge S.J."/>
        </authorList>
    </citation>
    <scope>IDENTIFICATION BY MASS SPECTROMETRY [LARGE SCALE ANALYSIS]</scope>
    <source>
        <tissue>Embryonic kidney</tissue>
    </source>
</reference>
<reference key="11">
    <citation type="journal article" date="2008" name="Proc. Natl. Acad. Sci. U.S.A.">
        <title>A quantitative atlas of mitotic phosphorylation.</title>
        <authorList>
            <person name="Dephoure N."/>
            <person name="Zhou C."/>
            <person name="Villen J."/>
            <person name="Beausoleil S.A."/>
            <person name="Bakalarski C.E."/>
            <person name="Elledge S.J."/>
            <person name="Gygi S.P."/>
        </authorList>
    </citation>
    <scope>PHOSPHORYLATION [LARGE SCALE ANALYSIS] AT SER-604</scope>
    <scope>IDENTIFICATION BY MASS SPECTROMETRY [LARGE SCALE ANALYSIS]</scope>
    <source>
        <tissue>Cervix carcinoma</tissue>
    </source>
</reference>
<reference key="12">
    <citation type="journal article" date="2009" name="Sci. Signal.">
        <title>Quantitative phosphoproteomic analysis of T cell receptor signaling reveals system-wide modulation of protein-protein interactions.</title>
        <authorList>
            <person name="Mayya V."/>
            <person name="Lundgren D.H."/>
            <person name="Hwang S.-I."/>
            <person name="Rezaul K."/>
            <person name="Wu L."/>
            <person name="Eng J.K."/>
            <person name="Rodionov V."/>
            <person name="Han D.K."/>
        </authorList>
    </citation>
    <scope>IDENTIFICATION BY MASS SPECTROMETRY [LARGE SCALE ANALYSIS]</scope>
    <source>
        <tissue>Leukemic T-cell</tissue>
    </source>
</reference>
<reference key="13">
    <citation type="journal article" date="2011" name="Sci. Signal.">
        <title>System-wide temporal characterization of the proteome and phosphoproteome of human embryonic stem cell differentiation.</title>
        <authorList>
            <person name="Rigbolt K.T."/>
            <person name="Prokhorova T.A."/>
            <person name="Akimov V."/>
            <person name="Henningsen J."/>
            <person name="Johansen P.T."/>
            <person name="Kratchmarova I."/>
            <person name="Kassem M."/>
            <person name="Mann M."/>
            <person name="Olsen J.V."/>
            <person name="Blagoev B."/>
        </authorList>
    </citation>
    <scope>IDENTIFICATION BY MASS SPECTROMETRY [LARGE SCALE ANALYSIS]</scope>
</reference>
<reference key="14">
    <citation type="journal article" date="2012" name="Proc. Natl. Acad. Sci. U.S.A.">
        <title>N-terminal acetylome analyses and functional insights of the N-terminal acetyltransferase NatB.</title>
        <authorList>
            <person name="Van Damme P."/>
            <person name="Lasa M."/>
            <person name="Polevoda B."/>
            <person name="Gazquez C."/>
            <person name="Elosegui-Artola A."/>
            <person name="Kim D.S."/>
            <person name="De Juan-Pardo E."/>
            <person name="Demeyer K."/>
            <person name="Hole K."/>
            <person name="Larrea E."/>
            <person name="Timmerman E."/>
            <person name="Prieto J."/>
            <person name="Arnesen T."/>
            <person name="Sherman F."/>
            <person name="Gevaert K."/>
            <person name="Aldabe R."/>
        </authorList>
    </citation>
    <scope>ACETYLATION [LARGE SCALE ANALYSIS] AT SER-2</scope>
    <scope>CLEAVAGE OF INITIATOR METHIONINE [LARGE SCALE ANALYSIS]</scope>
    <scope>IDENTIFICATION BY MASS SPECTROMETRY [LARGE SCALE ANALYSIS]</scope>
</reference>
<reference key="15">
    <citation type="journal article" date="2013" name="J. Proteome Res.">
        <title>Toward a comprehensive characterization of a human cancer cell phosphoproteome.</title>
        <authorList>
            <person name="Zhou H."/>
            <person name="Di Palma S."/>
            <person name="Preisinger C."/>
            <person name="Peng M."/>
            <person name="Polat A.N."/>
            <person name="Heck A.J."/>
            <person name="Mohammed S."/>
        </authorList>
    </citation>
    <scope>PHOSPHORYLATION [LARGE SCALE ANALYSIS] AT SER-399; SER-407; SER-427; SER-452; SER-509; THR-560 AND SER-604</scope>
    <scope>IDENTIFICATION BY MASS SPECTROMETRY [LARGE SCALE ANALYSIS]</scope>
    <source>
        <tissue>Cervix carcinoma</tissue>
        <tissue>Erythroleukemia</tissue>
    </source>
</reference>
<reference key="16">
    <citation type="journal article" date="2014" name="J. Proteomics">
        <title>An enzyme assisted RP-RPLC approach for in-depth analysis of human liver phosphoproteome.</title>
        <authorList>
            <person name="Bian Y."/>
            <person name="Song C."/>
            <person name="Cheng K."/>
            <person name="Dong M."/>
            <person name="Wang F."/>
            <person name="Huang J."/>
            <person name="Sun D."/>
            <person name="Wang L."/>
            <person name="Ye M."/>
            <person name="Zou H."/>
        </authorList>
    </citation>
    <scope>PHOSPHORYLATION [LARGE SCALE ANALYSIS] AT SER-427 AND SER-509</scope>
    <scope>IDENTIFICATION BY MASS SPECTROMETRY [LARGE SCALE ANALYSIS]</scope>
    <source>
        <tissue>Liver</tissue>
    </source>
</reference>
<reference key="17">
    <citation type="journal article" date="2016" name="PLoS ONE">
        <title>Characterization and Genetic Analyses of New Genes Coding for NOD2 Interacting Proteins.</title>
        <authorList>
            <person name="Thiebaut R."/>
            <person name="Esmiol S."/>
            <person name="Lecine P."/>
            <person name="Mahfouz B."/>
            <person name="Hermant A."/>
            <person name="Nicoletti C."/>
            <person name="Parnis S."/>
            <person name="Perroy J."/>
            <person name="Borg J.P."/>
            <person name="Pascoe L."/>
            <person name="Hugot J.P."/>
            <person name="Ollendorff V."/>
        </authorList>
    </citation>
    <scope>INTERACTION WITH NOD2</scope>
</reference>
<comment type="function">
    <text evidence="4">Regulates myosin phosphatase activity.</text>
</comment>
<comment type="subunit">
    <text evidence="4 5 8">PP1 comprises a catalytic subunit, PPP1CA, PPP1CB or PPP1CC, and one or several targeting or regulatory subunits. PPP1R12C mediates binding to myosin. Interacts via its N-terminus with PPP1CB. Interacts with IL16. Interacts with the coiled-coil domain of MPRIP. Interacts with NOD2 (PubMed:27812135).</text>
</comment>
<comment type="interaction">
    <interactant intactId="EBI-721802">
        <id>Q9BZL4</id>
    </interactant>
    <interactant intactId="EBI-8643161">
        <id>Q9NX04</id>
        <label>AIRIM</label>
    </interactant>
    <organismsDiffer>false</organismsDiffer>
    <experiments>3</experiments>
</comment>
<comment type="interaction">
    <interactant intactId="EBI-721802">
        <id>Q9BZL4</id>
    </interactant>
    <interactant intactId="EBI-724719">
        <id>Q9UI12</id>
        <label>ATP6V1H</label>
    </interactant>
    <organismsDiffer>false</organismsDiffer>
    <experiments>3</experiments>
</comment>
<comment type="interaction">
    <interactant intactId="EBI-721802">
        <id>Q9BZL4</id>
    </interactant>
    <interactant intactId="EBI-17508719">
        <id>Q7RTU4</id>
        <label>BHLHA9</label>
    </interactant>
    <organismsDiffer>false</organismsDiffer>
    <experiments>3</experiments>
</comment>
<comment type="interaction">
    <interactant intactId="EBI-721802">
        <id>Q9BZL4</id>
    </interactant>
    <interactant intactId="EBI-740814">
        <id>Q8N715</id>
        <label>CCDC185</label>
    </interactant>
    <organismsDiffer>false</organismsDiffer>
    <experiments>3</experiments>
</comment>
<comment type="interaction">
    <interactant intactId="EBI-721802">
        <id>Q9BZL4</id>
    </interactant>
    <interactant intactId="EBI-2339219">
        <id>Q08426</id>
        <label>EHHADH</label>
    </interactant>
    <organismsDiffer>false</organismsDiffer>
    <experiments>3</experiments>
</comment>
<comment type="interaction">
    <interactant intactId="EBI-721802">
        <id>Q9BZL4</id>
    </interactant>
    <interactant intactId="EBI-1052278">
        <id>O60645</id>
        <label>EXOC3</label>
    </interactant>
    <organismsDiffer>false</organismsDiffer>
    <experiments>3</experiments>
</comment>
<comment type="interaction">
    <interactant intactId="EBI-721802">
        <id>Q9BZL4</id>
    </interactant>
    <interactant intactId="EBI-747481">
        <id>Q9NV31</id>
        <label>IMP3</label>
    </interactant>
    <organismsDiffer>false</organismsDiffer>
    <experiments>3</experiments>
</comment>
<comment type="interaction">
    <interactant intactId="EBI-721802">
        <id>Q9BZL4</id>
    </interactant>
    <interactant intactId="EBI-7445625">
        <id>Q9HC29</id>
        <label>NOD2</label>
    </interactant>
    <organismsDiffer>false</organismsDiffer>
    <experiments>5</experiments>
</comment>
<comment type="interaction">
    <interactant intactId="EBI-721802">
        <id>Q9BZL4</id>
    </interactant>
    <interactant intactId="EBI-398874">
        <id>Q9UBU9</id>
        <label>NXF1</label>
    </interactant>
    <organismsDiffer>false</organismsDiffer>
    <experiments>3</experiments>
</comment>
<comment type="interaction">
    <interactant intactId="EBI-721802">
        <id>Q9BZL4</id>
    </interactant>
    <interactant intactId="EBI-740272">
        <id>Q96I25</id>
        <label>RBM17</label>
    </interactant>
    <organismsDiffer>false</organismsDiffer>
    <experiments>3</experiments>
</comment>
<comment type="interaction">
    <interactant intactId="EBI-721802">
        <id>Q9BZL4</id>
    </interactant>
    <interactant intactId="EBI-347161">
        <id>P84022</id>
        <label>SMAD3</label>
    </interactant>
    <organismsDiffer>false</organismsDiffer>
    <experiments>2</experiments>
</comment>
<comment type="interaction">
    <interactant intactId="EBI-721802">
        <id>Q9BZL4</id>
    </interactant>
    <interactant intactId="EBI-351113">
        <id>Q69YQ0</id>
        <label>SPECC1L</label>
    </interactant>
    <organismsDiffer>false</organismsDiffer>
    <experiments>3</experiments>
</comment>
<comment type="interaction">
    <interactant intactId="EBI-721802">
        <id>Q9BZL4</id>
    </interactant>
    <interactant intactId="EBI-1765605">
        <id>Q96FV9</id>
        <label>THOC1</label>
    </interactant>
    <organismsDiffer>false</organismsDiffer>
    <experiments>3</experiments>
</comment>
<comment type="interaction">
    <interactant intactId="EBI-721802">
        <id>Q9BZL4</id>
    </interactant>
    <interactant intactId="EBI-4398527">
        <id>Q9H2K2</id>
        <label>TNKS2</label>
    </interactant>
    <organismsDiffer>false</organismsDiffer>
    <experiments>2</experiments>
</comment>
<comment type="interaction">
    <interactant intactId="EBI-721802">
        <id>Q9BZL4</id>
    </interactant>
    <interactant intactId="EBI-739895">
        <id>Q8N6Y0</id>
        <label>USHBP1</label>
    </interactant>
    <organismsDiffer>false</organismsDiffer>
    <experiments>3</experiments>
</comment>
<comment type="interaction">
    <interactant intactId="EBI-10289057">
        <id>Q9BZL4-5</id>
    </interactant>
    <interactant intactId="EBI-8643161">
        <id>Q9NX04</id>
        <label>AIRIM</label>
    </interactant>
    <organismsDiffer>false</organismsDiffer>
    <experiments>3</experiments>
</comment>
<comment type="interaction">
    <interactant intactId="EBI-10289057">
        <id>Q9BZL4-5</id>
    </interactant>
    <interactant intactId="EBI-740272">
        <id>Q96I25</id>
        <label>RBM17</label>
    </interactant>
    <organismsDiffer>false</organismsDiffer>
    <experiments>3</experiments>
</comment>
<comment type="subcellular location">
    <subcellularLocation>
        <location evidence="4 5">Cytoplasm</location>
    </subcellularLocation>
    <subcellularLocation>
        <location evidence="4 5">Cytoplasm</location>
        <location evidence="4 5">Cytoskeleton</location>
        <location evidence="4 5">Stress fiber</location>
    </subcellularLocation>
</comment>
<comment type="alternative products">
    <event type="alternative splicing"/>
    <isoform>
        <id>Q9BZL4-1</id>
        <name evidence="4 6 7">1</name>
        <sequence type="displayed"/>
    </isoform>
    <isoform>
        <id>Q9BZL4-2</id>
        <name evidence="6">2</name>
        <sequence type="described" ref="VSP_052643"/>
    </isoform>
    <isoform>
        <id>Q9BZL4-3</id>
        <name>3</name>
        <sequence type="described" ref="VSP_030750 VSP_030751"/>
    </isoform>
    <isoform>
        <id>Q9BZL4-4</id>
        <name>4</name>
        <sequence type="described" ref="VSP_030751"/>
    </isoform>
    <isoform>
        <id>Q9BZL4-5</id>
        <name>5</name>
        <sequence type="described" ref="VSP_057216 VSP_057217 VSP_030751"/>
    </isoform>
</comment>
<comment type="tissue specificity">
    <text evidence="4">Ubiquitously expressed. Highly expressed in heart.</text>
</comment>
<comment type="PTM">
    <text evidence="4">Phosphorylation at Thr-560 is essential for its interaction with PPP1CB.</text>
</comment>
<comment type="caution">
    <text evidence="13">Although assigned as two separate genes (PPP1R12C and LENG3), it is probable that LENG3 does not exist by itself and is a part of the PPP1R12C gene.</text>
</comment>
<comment type="sequence caution" evidence="13">
    <conflict type="miscellaneous discrepancy">
        <sequence resource="EMBL" id="AF211968"/>
    </conflict>
    <text>Unspliced mRNA.</text>
</comment>
<comment type="sequence caution" evidence="13">
    <conflict type="erroneous initiation">
        <sequence resource="EMBL-CDS" id="BAB15651"/>
    </conflict>
</comment>
<comment type="sequence caution" evidence="13">
    <conflict type="erroneous initiation">
        <sequence resource="EMBL-CDS" id="BAC85179"/>
    </conflict>
</comment>
<organism>
    <name type="scientific">Homo sapiens</name>
    <name type="common">Human</name>
    <dbReference type="NCBI Taxonomy" id="9606"/>
    <lineage>
        <taxon>Eukaryota</taxon>
        <taxon>Metazoa</taxon>
        <taxon>Chordata</taxon>
        <taxon>Craniata</taxon>
        <taxon>Vertebrata</taxon>
        <taxon>Euteleostomi</taxon>
        <taxon>Mammalia</taxon>
        <taxon>Eutheria</taxon>
        <taxon>Euarchontoglires</taxon>
        <taxon>Primates</taxon>
        <taxon>Haplorrhini</taxon>
        <taxon>Catarrhini</taxon>
        <taxon>Hominidae</taxon>
        <taxon>Homo</taxon>
    </lineage>
</organism>
<feature type="initiator methionine" description="Removed" evidence="21">
    <location>
        <position position="1"/>
    </location>
</feature>
<feature type="chain" id="PRO_0000315863" description="Protein phosphatase 1 regulatory subunit 12C">
    <location>
        <begin position="2"/>
        <end position="782"/>
    </location>
</feature>
<feature type="repeat" description="ANK 1" evidence="2">
    <location>
        <begin position="100"/>
        <end position="129"/>
    </location>
</feature>
<feature type="repeat" description="ANK 2" evidence="2">
    <location>
        <begin position="133"/>
        <end position="162"/>
    </location>
</feature>
<feature type="repeat" description="ANK 3" evidence="2">
    <location>
        <begin position="226"/>
        <end position="255"/>
    </location>
</feature>
<feature type="repeat" description="ANK 4" evidence="2">
    <location>
        <begin position="259"/>
        <end position="288"/>
    </location>
</feature>
<feature type="region of interest" description="Disordered" evidence="3">
    <location>
        <begin position="1"/>
        <end position="43"/>
    </location>
</feature>
<feature type="region of interest" description="Disordered" evidence="3">
    <location>
        <begin position="316"/>
        <end position="686"/>
    </location>
</feature>
<feature type="coiled-coil region" evidence="2">
    <location>
        <begin position="297"/>
        <end position="329"/>
    </location>
</feature>
<feature type="coiled-coil region" evidence="2">
    <location>
        <begin position="681"/>
        <end position="782"/>
    </location>
</feature>
<feature type="compositionally biased region" description="Low complexity" evidence="3">
    <location>
        <begin position="1"/>
        <end position="17"/>
    </location>
</feature>
<feature type="compositionally biased region" description="Polar residues" evidence="3">
    <location>
        <begin position="323"/>
        <end position="337"/>
    </location>
</feature>
<feature type="compositionally biased region" description="Basic and acidic residues" evidence="3">
    <location>
        <begin position="349"/>
        <end position="365"/>
    </location>
</feature>
<feature type="compositionally biased region" description="Acidic residues" evidence="3">
    <location>
        <begin position="374"/>
        <end position="383"/>
    </location>
</feature>
<feature type="compositionally biased region" description="Polar residues" evidence="3">
    <location>
        <begin position="449"/>
        <end position="463"/>
    </location>
</feature>
<feature type="compositionally biased region" description="Basic and acidic residues" evidence="3">
    <location>
        <begin position="537"/>
        <end position="546"/>
    </location>
</feature>
<feature type="compositionally biased region" description="Basic residues" evidence="3">
    <location>
        <begin position="547"/>
        <end position="557"/>
    </location>
</feature>
<feature type="compositionally biased region" description="Basic and acidic residues" evidence="3">
    <location>
        <begin position="567"/>
        <end position="583"/>
    </location>
</feature>
<feature type="compositionally biased region" description="Acidic residues" evidence="3">
    <location>
        <begin position="670"/>
        <end position="680"/>
    </location>
</feature>
<feature type="modified residue" description="N-acetylserine" evidence="21">
    <location>
        <position position="2"/>
    </location>
</feature>
<feature type="modified residue" description="Phosphoserine" evidence="22">
    <location>
        <position position="399"/>
    </location>
</feature>
<feature type="modified residue" description="Phosphoserine" evidence="22">
    <location>
        <position position="407"/>
    </location>
</feature>
<feature type="modified residue" description="Phosphoserine" evidence="22 23">
    <location>
        <position position="427"/>
    </location>
</feature>
<feature type="modified residue" description="Phosphoserine" evidence="22">
    <location>
        <position position="452"/>
    </location>
</feature>
<feature type="modified residue" description="Phosphoserine" evidence="22 23">
    <location>
        <position position="509"/>
    </location>
</feature>
<feature type="modified residue" description="Phosphothreonine; by CDC42BP and ROCK2" evidence="4 22">
    <location>
        <position position="560"/>
    </location>
</feature>
<feature type="modified residue" description="Phosphoserine" evidence="20 22">
    <location>
        <position position="604"/>
    </location>
</feature>
<feature type="modified residue" description="Phosphoserine" evidence="1">
    <location>
        <position position="647"/>
    </location>
</feature>
<feature type="splice variant" id="VSP_057216" description="In isoform 5." evidence="10">
    <original>MSGEDGPAAGPGAAAAAARERRREQLRQWGAR</original>
    <variation>MRNGGPCQPLAAGPRAEGASVNWSVTAWGPGT</variation>
    <location>
        <begin position="1"/>
        <end position="32"/>
    </location>
</feature>
<feature type="splice variant" id="VSP_057217" description="In isoform 5." evidence="10">
    <location>
        <begin position="33"/>
        <end position="106"/>
    </location>
</feature>
<feature type="splice variant" id="VSP_030750" description="In isoform 3." evidence="10 12">
    <location>
        <position position="410"/>
    </location>
</feature>
<feature type="splice variant" id="VSP_052643" description="In isoform 2." evidence="10">
    <location>
        <begin position="576"/>
        <end position="638"/>
    </location>
</feature>
<feature type="splice variant" id="VSP_030751" description="In isoform 3, isoform 4 and isoform 5." evidence="10 11 12">
    <location>
        <position position="609"/>
    </location>
</feature>
<feature type="sequence variant" id="VAR_048310" description="In dbSNP:rs35849605.">
    <original>R</original>
    <variation>C</variation>
    <location>
        <position position="419"/>
    </location>
</feature>
<feature type="sequence conflict" description="In Ref. 8; AAH08030." evidence="13" ref="8">
    <original>T</original>
    <variation>I</variation>
    <location>
        <position position="438"/>
    </location>
</feature>
<feature type="sequence conflict" description="In Ref. 2; BAB15651." evidence="13" ref="2">
    <original>R</original>
    <variation>W</variation>
    <location>
        <position position="527"/>
    </location>
</feature>
<feature type="sequence conflict" description="In Ref. 2; BAC85179." evidence="13" ref="2">
    <original>V</original>
    <variation>A</variation>
    <location>
        <position position="537"/>
    </location>
</feature>
<dbReference type="EMBL" id="AF312028">
    <property type="protein sequence ID" value="AAG60045.1"/>
    <property type="molecule type" value="mRNA"/>
</dbReference>
<dbReference type="EMBL" id="AB209452">
    <property type="protein sequence ID" value="BAD92689.1"/>
    <property type="molecule type" value="mRNA"/>
</dbReference>
<dbReference type="EMBL" id="AK129529">
    <property type="protein sequence ID" value="BAC85179.1"/>
    <property type="status" value="ALT_INIT"/>
    <property type="molecule type" value="mRNA"/>
</dbReference>
<dbReference type="EMBL" id="AK297426">
    <property type="protein sequence ID" value="BAG59854.1"/>
    <property type="molecule type" value="mRNA"/>
</dbReference>
<dbReference type="EMBL" id="AK027086">
    <property type="protein sequence ID" value="BAB15651.1"/>
    <property type="status" value="ALT_INIT"/>
    <property type="molecule type" value="mRNA"/>
</dbReference>
<dbReference type="EMBL" id="AC005782">
    <property type="status" value="NOT_ANNOTATED_CDS"/>
    <property type="molecule type" value="Genomic_DNA"/>
</dbReference>
<dbReference type="EMBL" id="AC010327">
    <property type="status" value="NOT_ANNOTATED_CDS"/>
    <property type="molecule type" value="Genomic_DNA"/>
</dbReference>
<dbReference type="EMBL" id="AF211968">
    <property type="status" value="NOT_ANNOTATED_CDS"/>
    <property type="molecule type" value="mRNA"/>
</dbReference>
<dbReference type="EMBL" id="AL137618">
    <property type="protein sequence ID" value="CAB70844.1"/>
    <property type="molecule type" value="mRNA"/>
</dbReference>
<dbReference type="EMBL" id="BC008030">
    <property type="protein sequence ID" value="AAH08030.1"/>
    <property type="molecule type" value="mRNA"/>
</dbReference>
<dbReference type="CCDS" id="CCDS12916.1">
    <molecule id="Q9BZL4-1"/>
</dbReference>
<dbReference type="PIR" id="T46318">
    <property type="entry name" value="T46318"/>
</dbReference>
<dbReference type="RefSeq" id="NP_001258547.1">
    <molecule id="Q9BZL4-3"/>
    <property type="nucleotide sequence ID" value="NM_001271618.2"/>
</dbReference>
<dbReference type="RefSeq" id="NP_060077.1">
    <molecule id="Q9BZL4-1"/>
    <property type="nucleotide sequence ID" value="NM_017607.4"/>
</dbReference>
<dbReference type="RefSeq" id="XP_005259070.1">
    <molecule id="Q9BZL4-4"/>
    <property type="nucleotide sequence ID" value="XM_005259013.5"/>
</dbReference>
<dbReference type="RefSeq" id="XP_054177276.1">
    <molecule id="Q9BZL4-4"/>
    <property type="nucleotide sequence ID" value="XM_054321301.1"/>
</dbReference>
<dbReference type="SMR" id="Q9BZL4"/>
<dbReference type="BioGRID" id="120144">
    <property type="interactions" value="60"/>
</dbReference>
<dbReference type="ELM" id="Q9BZL4"/>
<dbReference type="FunCoup" id="Q9BZL4">
    <property type="interactions" value="1246"/>
</dbReference>
<dbReference type="IntAct" id="Q9BZL4">
    <property type="interactions" value="48"/>
</dbReference>
<dbReference type="MINT" id="Q9BZL4"/>
<dbReference type="STRING" id="9606.ENSP00000263433"/>
<dbReference type="GlyGen" id="Q9BZL4">
    <property type="glycosylation" value="3 sites, 1 O-linked glycan (1 site)"/>
</dbReference>
<dbReference type="iPTMnet" id="Q9BZL4"/>
<dbReference type="PhosphoSitePlus" id="Q9BZL4"/>
<dbReference type="BioMuta" id="PPP1R12C"/>
<dbReference type="DMDM" id="74752476"/>
<dbReference type="jPOST" id="Q9BZL4"/>
<dbReference type="MassIVE" id="Q9BZL4"/>
<dbReference type="PaxDb" id="9606-ENSP00000263433"/>
<dbReference type="PeptideAtlas" id="Q9BZL4"/>
<dbReference type="ProteomicsDB" id="4602"/>
<dbReference type="ProteomicsDB" id="79868">
    <molecule id="Q9BZL4-1"/>
</dbReference>
<dbReference type="ProteomicsDB" id="79869">
    <molecule id="Q9BZL4-2"/>
</dbReference>
<dbReference type="ProteomicsDB" id="79870">
    <molecule id="Q9BZL4-3"/>
</dbReference>
<dbReference type="ProteomicsDB" id="79871">
    <molecule id="Q9BZL4-4"/>
</dbReference>
<dbReference type="Pumba" id="Q9BZL4"/>
<dbReference type="Antibodypedia" id="50850">
    <property type="antibodies" value="55 antibodies from 17 providers"/>
</dbReference>
<dbReference type="DNASU" id="54776"/>
<dbReference type="Ensembl" id="ENST00000263433.8">
    <molecule id="Q9BZL4-1"/>
    <property type="protein sequence ID" value="ENSP00000263433.1"/>
    <property type="gene ID" value="ENSG00000125503.13"/>
</dbReference>
<dbReference type="Ensembl" id="ENST00000435544.6">
    <molecule id="Q9BZL4-5"/>
    <property type="protein sequence ID" value="ENSP00000387833.2"/>
    <property type="gene ID" value="ENSG00000125503.13"/>
</dbReference>
<dbReference type="GeneID" id="54776"/>
<dbReference type="KEGG" id="hsa:54776"/>
<dbReference type="MANE-Select" id="ENST00000263433.8">
    <property type="protein sequence ID" value="ENSP00000263433.1"/>
    <property type="RefSeq nucleotide sequence ID" value="NM_017607.4"/>
    <property type="RefSeq protein sequence ID" value="NP_060077.1"/>
</dbReference>
<dbReference type="UCSC" id="uc002qix.5">
    <molecule id="Q9BZL4-1"/>
    <property type="organism name" value="human"/>
</dbReference>
<dbReference type="AGR" id="HGNC:14947"/>
<dbReference type="CTD" id="54776"/>
<dbReference type="DisGeNET" id="54776"/>
<dbReference type="GeneCards" id="PPP1R12C"/>
<dbReference type="HGNC" id="HGNC:14947">
    <property type="gene designation" value="PPP1R12C"/>
</dbReference>
<dbReference type="HPA" id="ENSG00000125503">
    <property type="expression patterns" value="Low tissue specificity"/>
</dbReference>
<dbReference type="MIM" id="613245">
    <property type="type" value="gene"/>
</dbReference>
<dbReference type="neXtProt" id="NX_Q9BZL4"/>
<dbReference type="OpenTargets" id="ENSG00000125503"/>
<dbReference type="PharmGKB" id="PA33619"/>
<dbReference type="VEuPathDB" id="HostDB:ENSG00000125503"/>
<dbReference type="eggNOG" id="KOG0505">
    <property type="taxonomic scope" value="Eukaryota"/>
</dbReference>
<dbReference type="GeneTree" id="ENSGT00940000161425"/>
<dbReference type="InParanoid" id="Q9BZL4"/>
<dbReference type="OMA" id="AWGPDTQ"/>
<dbReference type="OrthoDB" id="19014at2759"/>
<dbReference type="PAN-GO" id="Q9BZL4">
    <property type="GO annotations" value="3 GO annotations based on evolutionary models"/>
</dbReference>
<dbReference type="PhylomeDB" id="Q9BZL4"/>
<dbReference type="TreeFam" id="TF105543"/>
<dbReference type="PathwayCommons" id="Q9BZL4"/>
<dbReference type="SignaLink" id="Q9BZL4"/>
<dbReference type="SIGNOR" id="Q9BZL4"/>
<dbReference type="BioGRID-ORCS" id="54776">
    <property type="hits" value="24 hits in 1146 CRISPR screens"/>
</dbReference>
<dbReference type="ChiTaRS" id="PPP1R12C">
    <property type="organism name" value="human"/>
</dbReference>
<dbReference type="GenomeRNAi" id="54776"/>
<dbReference type="Pharos" id="Q9BZL4">
    <property type="development level" value="Tdark"/>
</dbReference>
<dbReference type="PRO" id="PR:Q9BZL4"/>
<dbReference type="Proteomes" id="UP000005640">
    <property type="component" value="Chromosome 19"/>
</dbReference>
<dbReference type="RNAct" id="Q9BZL4">
    <property type="molecule type" value="protein"/>
</dbReference>
<dbReference type="Bgee" id="ENSG00000125503">
    <property type="expression patterns" value="Expressed in lower esophagus muscularis layer and 179 other cell types or tissues"/>
</dbReference>
<dbReference type="ExpressionAtlas" id="Q9BZL4">
    <property type="expression patterns" value="baseline and differential"/>
</dbReference>
<dbReference type="GO" id="GO:0005737">
    <property type="term" value="C:cytoplasm"/>
    <property type="evidence" value="ECO:0000318"/>
    <property type="project" value="GO_Central"/>
</dbReference>
<dbReference type="GO" id="GO:0001725">
    <property type="term" value="C:stress fiber"/>
    <property type="evidence" value="ECO:0007669"/>
    <property type="project" value="UniProtKB-SubCell"/>
</dbReference>
<dbReference type="GO" id="GO:0004857">
    <property type="term" value="F:enzyme inhibitor activity"/>
    <property type="evidence" value="ECO:0000318"/>
    <property type="project" value="GO_Central"/>
</dbReference>
<dbReference type="GO" id="GO:0017020">
    <property type="term" value="F:myosin phosphatase regulator activity"/>
    <property type="evidence" value="ECO:0000318"/>
    <property type="project" value="GO_Central"/>
</dbReference>
<dbReference type="GO" id="GO:0019901">
    <property type="term" value="F:protein kinase binding"/>
    <property type="evidence" value="ECO:0007669"/>
    <property type="project" value="InterPro"/>
</dbReference>
<dbReference type="GO" id="GO:0048812">
    <property type="term" value="P:neuron projection morphogenesis"/>
    <property type="evidence" value="ECO:0000318"/>
    <property type="project" value="GO_Central"/>
</dbReference>
<dbReference type="GO" id="GO:0007165">
    <property type="term" value="P:signal transduction"/>
    <property type="evidence" value="ECO:0007669"/>
    <property type="project" value="InterPro"/>
</dbReference>
<dbReference type="CDD" id="cd21945">
    <property type="entry name" value="IPD_PPP1R12C"/>
    <property type="match status" value="1"/>
</dbReference>
<dbReference type="FunFam" id="1.25.40.20:FF:000004">
    <property type="entry name" value="Phosphatase 1 regulatory subunit 12A"/>
    <property type="match status" value="1"/>
</dbReference>
<dbReference type="FunFam" id="1.25.40.20:FF:000212">
    <property type="entry name" value="Protein phosphatase 1 regulatory subunit"/>
    <property type="match status" value="1"/>
</dbReference>
<dbReference type="Gene3D" id="6.10.140.390">
    <property type="match status" value="1"/>
</dbReference>
<dbReference type="Gene3D" id="6.10.250.1820">
    <property type="match status" value="1"/>
</dbReference>
<dbReference type="Gene3D" id="1.25.40.20">
    <property type="entry name" value="Ankyrin repeat-containing domain"/>
    <property type="match status" value="2"/>
</dbReference>
<dbReference type="InterPro" id="IPR002110">
    <property type="entry name" value="Ankyrin_rpt"/>
</dbReference>
<dbReference type="InterPro" id="IPR036770">
    <property type="entry name" value="Ankyrin_rpt-contain_sf"/>
</dbReference>
<dbReference type="InterPro" id="IPR017401">
    <property type="entry name" value="MYPT1/MYPT2/Mbs85"/>
</dbReference>
<dbReference type="InterPro" id="IPR051226">
    <property type="entry name" value="PP1_Regulatory_Subunit"/>
</dbReference>
<dbReference type="InterPro" id="IPR031775">
    <property type="entry name" value="PRKG1_interact"/>
</dbReference>
<dbReference type="PANTHER" id="PTHR24179">
    <property type="entry name" value="PROTEIN PHOSPHATASE 1 REGULATORY SUBUNIT 12"/>
    <property type="match status" value="1"/>
</dbReference>
<dbReference type="PANTHER" id="PTHR24179:SF27">
    <property type="entry name" value="PROTEIN PHOSPHATASE 1 REGULATORY SUBUNIT 12C"/>
    <property type="match status" value="1"/>
</dbReference>
<dbReference type="Pfam" id="PF12796">
    <property type="entry name" value="Ank_2"/>
    <property type="match status" value="2"/>
</dbReference>
<dbReference type="Pfam" id="PF15898">
    <property type="entry name" value="PRKG1_interact"/>
    <property type="match status" value="1"/>
</dbReference>
<dbReference type="PIRSF" id="PIRSF038141">
    <property type="entry name" value="PP1_12ABC_vert"/>
    <property type="match status" value="1"/>
</dbReference>
<dbReference type="PRINTS" id="PR01415">
    <property type="entry name" value="ANKYRIN"/>
</dbReference>
<dbReference type="SMART" id="SM00248">
    <property type="entry name" value="ANK"/>
    <property type="match status" value="4"/>
</dbReference>
<dbReference type="SUPFAM" id="SSF48403">
    <property type="entry name" value="Ankyrin repeat"/>
    <property type="match status" value="1"/>
</dbReference>
<dbReference type="PROSITE" id="PS50297">
    <property type="entry name" value="ANK_REP_REGION"/>
    <property type="match status" value="1"/>
</dbReference>
<dbReference type="PROSITE" id="PS50088">
    <property type="entry name" value="ANK_REPEAT"/>
    <property type="match status" value="4"/>
</dbReference>
<proteinExistence type="evidence at protein level"/>
<evidence type="ECO:0000250" key="1">
    <source>
        <dbReference type="UniProtKB" id="Q3UMT1"/>
    </source>
</evidence>
<evidence type="ECO:0000255" key="2"/>
<evidence type="ECO:0000256" key="3">
    <source>
        <dbReference type="SAM" id="MobiDB-lite"/>
    </source>
</evidence>
<evidence type="ECO:0000269" key="4">
    <source>
    </source>
</evidence>
<evidence type="ECO:0000269" key="5">
    <source>
    </source>
</evidence>
<evidence type="ECO:0000269" key="6">
    <source>
    </source>
</evidence>
<evidence type="ECO:0000269" key="7">
    <source>
    </source>
</evidence>
<evidence type="ECO:0000269" key="8">
    <source>
    </source>
</evidence>
<evidence type="ECO:0000303" key="9">
    <source>
    </source>
</evidence>
<evidence type="ECO:0000303" key="10">
    <source>
    </source>
</evidence>
<evidence type="ECO:0000303" key="11">
    <source>
    </source>
</evidence>
<evidence type="ECO:0000303" key="12">
    <source ref="3"/>
</evidence>
<evidence type="ECO:0000305" key="13"/>
<evidence type="ECO:0000312" key="14">
    <source>
        <dbReference type="EMBL" id="AAG60045.1"/>
    </source>
</evidence>
<evidence type="ECO:0000312" key="15">
    <source>
        <dbReference type="EMBL" id="AAH08030.1"/>
    </source>
</evidence>
<evidence type="ECO:0000312" key="16">
    <source>
        <dbReference type="EMBL" id="BAB15651.1"/>
    </source>
</evidence>
<evidence type="ECO:0000312" key="17">
    <source>
        <dbReference type="EMBL" id="BAC85179.1"/>
    </source>
</evidence>
<evidence type="ECO:0000312" key="18">
    <source>
        <dbReference type="EMBL" id="BAD92689.1"/>
    </source>
</evidence>
<evidence type="ECO:0000312" key="19">
    <source>
        <dbReference type="HGNC" id="HGNC:14947"/>
    </source>
</evidence>
<evidence type="ECO:0007744" key="20">
    <source>
    </source>
</evidence>
<evidence type="ECO:0007744" key="21">
    <source>
    </source>
</evidence>
<evidence type="ECO:0007744" key="22">
    <source>
    </source>
</evidence>
<evidence type="ECO:0007744" key="23">
    <source>
    </source>
</evidence>
<name>PP12C_HUMAN</name>
<keyword id="KW-0007">Acetylation</keyword>
<keyword id="KW-0025">Alternative splicing</keyword>
<keyword id="KW-0040">ANK repeat</keyword>
<keyword id="KW-0175">Coiled coil</keyword>
<keyword id="KW-0963">Cytoplasm</keyword>
<keyword id="KW-0206">Cytoskeleton</keyword>
<keyword id="KW-0597">Phosphoprotein</keyword>
<keyword id="KW-1267">Proteomics identification</keyword>
<keyword id="KW-1185">Reference proteome</keyword>
<keyword id="KW-0677">Repeat</keyword>
<accession>Q9BZL4</accession>
<accession>B4DME2</accession>
<accession>Q59FK8</accession>
<accession>Q6ZPD1</accession>
<accession>Q7L8F7</accession>
<accession>Q96HW1</accession>
<accession>Q9H5H5</accession>
<accession>Q9NT00</accession>
<sequence>MSGEDGPAAGPGAAAAAARERRREQLRQWGARAGAEPGPGERRARTVRFERAAEFLAACAGGDLDEARLMLRAADPGPGAELDPAAPPPARAVLDSTNADGISALHQACIDENLEVVRFLVEQGATVNQADNEGWTPLHVAASCGYLDIARYLLSHGANIAAVNSDGDLPLDLAESDAMEGLLKAEIARRGVDVEAAKRAEEELLLHDTRCWLNGGAMPEARHPRTGASALHVAAAKGYIEVMRLLLQAGYDPELRDGDGWTPLHAAAHWGVEDACRLLAEHGGGMDSLTHAGQRPCDLADEEVLSLLEELARKQEDLRNQKEASQSRGQEPQAPSSSKHRRSSVCRLSSREKISLQDLSKERRPGGAGGPPIQDEDEGEEGPTEPPPAEPRTLNGVSSPPHPSPKSPVQLEEAPFSRRFGLLKTGSSGALGPPERRTAEGAPGAGLQRSASSSWLEGTSTQAKELRLARITPTPSPKLPEPSVLSEVTKPPPCLENSSPPSRIPEPESPAKPNVPTASTAPPADSRDRRRSYQMPVRDEESESQRKARSRLMRQSRRSTQGVTLTDLKEAEKAAGKAPESEKPAQSLDPSRRPRVPGVENSDSPAQRAEAPDGQGPGPQAAREHRKVGKEWRGPAEGEEAEPADRSQESSTLEGGPSARRQRWQRDLNPEPEPESEEPDGGFRTLYAELRRENERLREALTETTLRLAQLKVELERATQRQERFAERPALLELERFERRALERKAAELEEELKALSDLRADNQRLKDENAALIRVISKLSK</sequence>